<feature type="chain" id="PRO_0000196649" description="Putative phosphoenolpyruvate synthase regulatory protein">
    <location>
        <begin position="1"/>
        <end position="277"/>
    </location>
</feature>
<feature type="binding site" evidence="1">
    <location>
        <begin position="156"/>
        <end position="163"/>
    </location>
    <ligand>
        <name>ADP</name>
        <dbReference type="ChEBI" id="CHEBI:456216"/>
    </ligand>
</feature>
<name>PSRP_DEIRA</name>
<sequence>MSGWGMPRPVFIVSDHTGLTAENIARALLTHFPGQPLRYLRRPFTSDAQAAQAVVSEVEALAASGERPLIFTTTTQPDVLEALQTAPAQVFDLLTENLRLLEGEFAEPPQLGAGGHHDMQDSEAYLSRMEALDFALATDDGIGDKQYGLSDVILVGVSRAGKTPTSLFLALQHGIRASNYPLAEDDFEREGLPAPLEQYRSKLFGLTIDPRRLHAIRTQRKPGSKYASIEQCEYEVRRASALFARLGLPVKDTTSASVEEIAAGVLALLRQSGRLEG</sequence>
<reference key="1">
    <citation type="journal article" date="1999" name="Science">
        <title>Genome sequence of the radioresistant bacterium Deinococcus radiodurans R1.</title>
        <authorList>
            <person name="White O."/>
            <person name="Eisen J.A."/>
            <person name="Heidelberg J.F."/>
            <person name="Hickey E.K."/>
            <person name="Peterson J.D."/>
            <person name="Dodson R.J."/>
            <person name="Haft D.H."/>
            <person name="Gwinn M.L."/>
            <person name="Nelson W.C."/>
            <person name="Richardson D.L."/>
            <person name="Moffat K.S."/>
            <person name="Qin H."/>
            <person name="Jiang L."/>
            <person name="Pamphile W."/>
            <person name="Crosby M."/>
            <person name="Shen M."/>
            <person name="Vamathevan J.J."/>
            <person name="Lam P."/>
            <person name="McDonald L.A."/>
            <person name="Utterback T.R."/>
            <person name="Zalewski C."/>
            <person name="Makarova K.S."/>
            <person name="Aravind L."/>
            <person name="Daly M.J."/>
            <person name="Minton K.W."/>
            <person name="Fleischmann R.D."/>
            <person name="Ketchum K.A."/>
            <person name="Nelson K.E."/>
            <person name="Salzberg S.L."/>
            <person name="Smith H.O."/>
            <person name="Venter J.C."/>
            <person name="Fraser C.M."/>
        </authorList>
    </citation>
    <scope>NUCLEOTIDE SEQUENCE [LARGE SCALE GENOMIC DNA]</scope>
    <source>
        <strain>ATCC 13939 / DSM 20539 / JCM 16871 / CCUG 27074 / LMG 4051 / NBRC 15346 / NCIMB 9279 / VKM B-1422 / R1</strain>
    </source>
</reference>
<evidence type="ECO:0000255" key="1">
    <source>
        <dbReference type="HAMAP-Rule" id="MF_01062"/>
    </source>
</evidence>
<accession>Q9RTN2</accession>
<proteinExistence type="inferred from homology"/>
<organism>
    <name type="scientific">Deinococcus radiodurans (strain ATCC 13939 / DSM 20539 / JCM 16871 / CCUG 27074 / LMG 4051 / NBRC 15346 / NCIMB 9279 / VKM B-1422 / R1)</name>
    <dbReference type="NCBI Taxonomy" id="243230"/>
    <lineage>
        <taxon>Bacteria</taxon>
        <taxon>Thermotogati</taxon>
        <taxon>Deinococcota</taxon>
        <taxon>Deinococci</taxon>
        <taxon>Deinococcales</taxon>
        <taxon>Deinococcaceae</taxon>
        <taxon>Deinococcus</taxon>
    </lineage>
</organism>
<comment type="function">
    <text evidence="1">Bifunctional serine/threonine kinase and phosphorylase involved in the regulation of the phosphoenolpyruvate synthase (PEPS) by catalyzing its phosphorylation/dephosphorylation.</text>
</comment>
<comment type="catalytic activity">
    <reaction evidence="1">
        <text>[pyruvate, water dikinase] + ADP = [pyruvate, water dikinase]-phosphate + AMP + H(+)</text>
        <dbReference type="Rhea" id="RHEA:46020"/>
        <dbReference type="Rhea" id="RHEA-COMP:11425"/>
        <dbReference type="Rhea" id="RHEA-COMP:11426"/>
        <dbReference type="ChEBI" id="CHEBI:15378"/>
        <dbReference type="ChEBI" id="CHEBI:43176"/>
        <dbReference type="ChEBI" id="CHEBI:68546"/>
        <dbReference type="ChEBI" id="CHEBI:456215"/>
        <dbReference type="ChEBI" id="CHEBI:456216"/>
        <dbReference type="EC" id="2.7.11.33"/>
    </reaction>
</comment>
<comment type="catalytic activity">
    <reaction evidence="1">
        <text>[pyruvate, water dikinase]-phosphate + phosphate + H(+) = [pyruvate, water dikinase] + diphosphate</text>
        <dbReference type="Rhea" id="RHEA:48580"/>
        <dbReference type="Rhea" id="RHEA-COMP:11425"/>
        <dbReference type="Rhea" id="RHEA-COMP:11426"/>
        <dbReference type="ChEBI" id="CHEBI:15378"/>
        <dbReference type="ChEBI" id="CHEBI:33019"/>
        <dbReference type="ChEBI" id="CHEBI:43176"/>
        <dbReference type="ChEBI" id="CHEBI:43474"/>
        <dbReference type="ChEBI" id="CHEBI:68546"/>
        <dbReference type="EC" id="2.7.4.28"/>
    </reaction>
</comment>
<comment type="similarity">
    <text evidence="1">Belongs to the pyruvate, phosphate/water dikinase regulatory protein family. PSRP subfamily.</text>
</comment>
<dbReference type="EC" id="2.7.11.33" evidence="1"/>
<dbReference type="EC" id="2.7.4.28" evidence="1"/>
<dbReference type="EMBL" id="AE000513">
    <property type="protein sequence ID" value="AAF11284.1"/>
    <property type="molecule type" value="Genomic_DNA"/>
</dbReference>
<dbReference type="PIR" id="E75361">
    <property type="entry name" value="E75361"/>
</dbReference>
<dbReference type="RefSeq" id="NP_295451.1">
    <property type="nucleotide sequence ID" value="NC_001263.1"/>
</dbReference>
<dbReference type="SMR" id="Q9RTN2"/>
<dbReference type="FunCoup" id="Q9RTN2">
    <property type="interactions" value="149"/>
</dbReference>
<dbReference type="PaxDb" id="243230-DR_1728"/>
<dbReference type="EnsemblBacteria" id="AAF11284">
    <property type="protein sequence ID" value="AAF11284"/>
    <property type="gene ID" value="DR_1728"/>
</dbReference>
<dbReference type="KEGG" id="dra:DR_1728"/>
<dbReference type="PATRIC" id="fig|243230.17.peg.1937"/>
<dbReference type="eggNOG" id="COG1806">
    <property type="taxonomic scope" value="Bacteria"/>
</dbReference>
<dbReference type="HOGENOM" id="CLU_046206_1_0_0"/>
<dbReference type="InParanoid" id="Q9RTN2"/>
<dbReference type="OrthoDB" id="9782201at2"/>
<dbReference type="Proteomes" id="UP000002524">
    <property type="component" value="Chromosome 1"/>
</dbReference>
<dbReference type="GO" id="GO:0043531">
    <property type="term" value="F:ADP binding"/>
    <property type="evidence" value="ECO:0007669"/>
    <property type="project" value="UniProtKB-UniRule"/>
</dbReference>
<dbReference type="GO" id="GO:0005524">
    <property type="term" value="F:ATP binding"/>
    <property type="evidence" value="ECO:0007669"/>
    <property type="project" value="InterPro"/>
</dbReference>
<dbReference type="GO" id="GO:0016776">
    <property type="term" value="F:phosphotransferase activity, phosphate group as acceptor"/>
    <property type="evidence" value="ECO:0007669"/>
    <property type="project" value="UniProtKB-UniRule"/>
</dbReference>
<dbReference type="GO" id="GO:0004674">
    <property type="term" value="F:protein serine/threonine kinase activity"/>
    <property type="evidence" value="ECO:0007669"/>
    <property type="project" value="UniProtKB-UniRule"/>
</dbReference>
<dbReference type="HAMAP" id="MF_01062">
    <property type="entry name" value="PSRP"/>
    <property type="match status" value="1"/>
</dbReference>
<dbReference type="InterPro" id="IPR005177">
    <property type="entry name" value="Kinase-pyrophosphorylase"/>
</dbReference>
<dbReference type="InterPro" id="IPR026530">
    <property type="entry name" value="PSRP"/>
</dbReference>
<dbReference type="NCBIfam" id="NF003742">
    <property type="entry name" value="PRK05339.1"/>
    <property type="match status" value="1"/>
</dbReference>
<dbReference type="PANTHER" id="PTHR31756">
    <property type="entry name" value="PYRUVATE, PHOSPHATE DIKINASE REGULATORY PROTEIN 1, CHLOROPLASTIC"/>
    <property type="match status" value="1"/>
</dbReference>
<dbReference type="PANTHER" id="PTHR31756:SF3">
    <property type="entry name" value="PYRUVATE, PHOSPHATE DIKINASE REGULATORY PROTEIN 1, CHLOROPLASTIC"/>
    <property type="match status" value="1"/>
</dbReference>
<dbReference type="Pfam" id="PF03618">
    <property type="entry name" value="Kinase-PPPase"/>
    <property type="match status" value="1"/>
</dbReference>
<protein>
    <recommendedName>
        <fullName evidence="1">Putative phosphoenolpyruvate synthase regulatory protein</fullName>
        <shortName evidence="1">PEP synthase regulatory protein</shortName>
        <shortName evidence="1">PSRP</shortName>
        <ecNumber evidence="1">2.7.11.33</ecNumber>
        <ecNumber evidence="1">2.7.4.28</ecNumber>
    </recommendedName>
    <alternativeName>
        <fullName evidence="1">Pyruvate, water dikinase regulatory protein</fullName>
    </alternativeName>
</protein>
<keyword id="KW-0418">Kinase</keyword>
<keyword id="KW-0547">Nucleotide-binding</keyword>
<keyword id="KW-1185">Reference proteome</keyword>
<keyword id="KW-0723">Serine/threonine-protein kinase</keyword>
<keyword id="KW-0808">Transferase</keyword>
<gene>
    <name type="ordered locus">DR_1728</name>
</gene>